<evidence type="ECO:0000250" key="1"/>
<evidence type="ECO:0000305" key="2"/>
<sequence>MFRLSAARTLAKSVNTVVAKRTYAEAADGALKLQFALPHQTLFSGTPVTQVNLPAKSGQIGILANHVPTVEQLVPGVVEVLEGSSSKKFFVSGGFATVQPDSTLAITSVEAFPLESFSPENVRSLLAEAQKNVSSADEVAAAEAAIQLEVLEALQAALK</sequence>
<protein>
    <recommendedName>
        <fullName>ATP synthase subunit delta, mitochondrial</fullName>
    </recommendedName>
    <alternativeName>
        <fullName>F-ATPase delta subunit</fullName>
    </alternativeName>
</protein>
<accession>P78700</accession>
<accession>Q6CJZ5</accession>
<reference key="1">
    <citation type="journal article" date="1998" name="Curr. Genet.">
        <title>Allele-specific expression of the Mgi- phenotype on disruption of the F1-ATPase delta-subunit gene in Kluyveromyces lactis.</title>
        <authorList>
            <person name="Hansbro P.M."/>
            <person name="Chen X.J."/>
            <person name="Clark-Walker G.D."/>
        </authorList>
    </citation>
    <scope>NUCLEOTIDE SEQUENCE [GENOMIC DNA]</scope>
    <source>
        <strain>ATCC 76492 / CBS 2359/152 / CLIB 210</strain>
    </source>
</reference>
<reference key="2">
    <citation type="journal article" date="2004" name="Nature">
        <title>Genome evolution in yeasts.</title>
        <authorList>
            <person name="Dujon B."/>
            <person name="Sherman D."/>
            <person name="Fischer G."/>
            <person name="Durrens P."/>
            <person name="Casaregola S."/>
            <person name="Lafontaine I."/>
            <person name="de Montigny J."/>
            <person name="Marck C."/>
            <person name="Neuveglise C."/>
            <person name="Talla E."/>
            <person name="Goffard N."/>
            <person name="Frangeul L."/>
            <person name="Aigle M."/>
            <person name="Anthouard V."/>
            <person name="Babour A."/>
            <person name="Barbe V."/>
            <person name="Barnay S."/>
            <person name="Blanchin S."/>
            <person name="Beckerich J.-M."/>
            <person name="Beyne E."/>
            <person name="Bleykasten C."/>
            <person name="Boisrame A."/>
            <person name="Boyer J."/>
            <person name="Cattolico L."/>
            <person name="Confanioleri F."/>
            <person name="de Daruvar A."/>
            <person name="Despons L."/>
            <person name="Fabre E."/>
            <person name="Fairhead C."/>
            <person name="Ferry-Dumazet H."/>
            <person name="Groppi A."/>
            <person name="Hantraye F."/>
            <person name="Hennequin C."/>
            <person name="Jauniaux N."/>
            <person name="Joyet P."/>
            <person name="Kachouri R."/>
            <person name="Kerrest A."/>
            <person name="Koszul R."/>
            <person name="Lemaire M."/>
            <person name="Lesur I."/>
            <person name="Ma L."/>
            <person name="Muller H."/>
            <person name="Nicaud J.-M."/>
            <person name="Nikolski M."/>
            <person name="Oztas S."/>
            <person name="Ozier-Kalogeropoulos O."/>
            <person name="Pellenz S."/>
            <person name="Potier S."/>
            <person name="Richard G.-F."/>
            <person name="Straub M.-L."/>
            <person name="Suleau A."/>
            <person name="Swennen D."/>
            <person name="Tekaia F."/>
            <person name="Wesolowski-Louvel M."/>
            <person name="Westhof E."/>
            <person name="Wirth B."/>
            <person name="Zeniou-Meyer M."/>
            <person name="Zivanovic Y."/>
            <person name="Bolotin-Fukuhara M."/>
            <person name="Thierry A."/>
            <person name="Bouchier C."/>
            <person name="Caudron B."/>
            <person name="Scarpelli C."/>
            <person name="Gaillardin C."/>
            <person name="Weissenbach J."/>
            <person name="Wincker P."/>
            <person name="Souciet J.-L."/>
        </authorList>
    </citation>
    <scope>NUCLEOTIDE SEQUENCE [LARGE SCALE GENOMIC DNA]</scope>
    <source>
        <strain>ATCC 8585 / CBS 2359 / DSM 70799 / NBRC 1267 / NRRL Y-1140 / WM37</strain>
    </source>
</reference>
<feature type="transit peptide" description="Mitochondrion" evidence="1">
    <location>
        <begin position="1"/>
        <end position="23"/>
    </location>
</feature>
<feature type="chain" id="PRO_0000002668" description="ATP synthase subunit delta, mitochondrial">
    <location>
        <begin position="24"/>
        <end position="159"/>
    </location>
</feature>
<feature type="sequence conflict" description="In Ref. 1; AAC15908." evidence="2" ref="1">
    <location>
        <position position="86"/>
    </location>
</feature>
<dbReference type="EMBL" id="U88046">
    <property type="protein sequence ID" value="AAC15908.1"/>
    <property type="molecule type" value="Genomic_DNA"/>
</dbReference>
<dbReference type="EMBL" id="CR382126">
    <property type="protein sequence ID" value="CAG98452.1"/>
    <property type="molecule type" value="Genomic_DNA"/>
</dbReference>
<dbReference type="RefSeq" id="XP_455744.1">
    <property type="nucleotide sequence ID" value="XM_455744.1"/>
</dbReference>
<dbReference type="SMR" id="P78700"/>
<dbReference type="FunCoup" id="P78700">
    <property type="interactions" value="761"/>
</dbReference>
<dbReference type="STRING" id="284590.P78700"/>
<dbReference type="PaxDb" id="284590-P78700"/>
<dbReference type="KEGG" id="kla:KLLA0_F14773g"/>
<dbReference type="eggNOG" id="KOG1758">
    <property type="taxonomic scope" value="Eukaryota"/>
</dbReference>
<dbReference type="HOGENOM" id="CLU_084338_0_0_1"/>
<dbReference type="InParanoid" id="P78700"/>
<dbReference type="OMA" id="HQTLYSE"/>
<dbReference type="Proteomes" id="UP000000598">
    <property type="component" value="Chromosome F"/>
</dbReference>
<dbReference type="GO" id="GO:0005743">
    <property type="term" value="C:mitochondrial inner membrane"/>
    <property type="evidence" value="ECO:0007669"/>
    <property type="project" value="UniProtKB-SubCell"/>
</dbReference>
<dbReference type="GO" id="GO:0045259">
    <property type="term" value="C:proton-transporting ATP synthase complex"/>
    <property type="evidence" value="ECO:0007669"/>
    <property type="project" value="UniProtKB-KW"/>
</dbReference>
<dbReference type="GO" id="GO:0046933">
    <property type="term" value="F:proton-transporting ATP synthase activity, rotational mechanism"/>
    <property type="evidence" value="ECO:0007669"/>
    <property type="project" value="InterPro"/>
</dbReference>
<dbReference type="CDD" id="cd12152">
    <property type="entry name" value="F1-ATPase_delta"/>
    <property type="match status" value="1"/>
</dbReference>
<dbReference type="FunFam" id="2.60.15.10:FF:000003">
    <property type="entry name" value="ATP synthase subunit delta, mitochondrial"/>
    <property type="match status" value="1"/>
</dbReference>
<dbReference type="Gene3D" id="6.10.140.880">
    <property type="match status" value="1"/>
</dbReference>
<dbReference type="Gene3D" id="2.60.15.10">
    <property type="entry name" value="F0F1 ATP synthase delta/epsilon subunit, N-terminal"/>
    <property type="match status" value="1"/>
</dbReference>
<dbReference type="HAMAP" id="MF_00530">
    <property type="entry name" value="ATP_synth_epsil_bac"/>
    <property type="match status" value="1"/>
</dbReference>
<dbReference type="InterPro" id="IPR001469">
    <property type="entry name" value="ATP_synth_F1_dsu/esu"/>
</dbReference>
<dbReference type="InterPro" id="IPR020546">
    <property type="entry name" value="ATP_synth_F1_dsu/esu_N"/>
</dbReference>
<dbReference type="InterPro" id="IPR048938">
    <property type="entry name" value="ATPD_C_fung"/>
</dbReference>
<dbReference type="InterPro" id="IPR036771">
    <property type="entry name" value="ATPsynth_dsu/esu_N"/>
</dbReference>
<dbReference type="PANTHER" id="PTHR13822">
    <property type="entry name" value="ATP SYNTHASE DELTA/EPSILON CHAIN"/>
    <property type="match status" value="1"/>
</dbReference>
<dbReference type="PANTHER" id="PTHR13822:SF7">
    <property type="entry name" value="ATP SYNTHASE SUBUNIT DELTA, MITOCHONDRIAL"/>
    <property type="match status" value="1"/>
</dbReference>
<dbReference type="Pfam" id="PF02823">
    <property type="entry name" value="ATP-synt_DE_N"/>
    <property type="match status" value="1"/>
</dbReference>
<dbReference type="Pfam" id="PF21334">
    <property type="entry name" value="ATPD_C_fung"/>
    <property type="match status" value="1"/>
</dbReference>
<dbReference type="SUPFAM" id="SSF51344">
    <property type="entry name" value="Epsilon subunit of F1F0-ATP synthase N-terminal domain"/>
    <property type="match status" value="1"/>
</dbReference>
<organism>
    <name type="scientific">Kluyveromyces lactis (strain ATCC 8585 / CBS 2359 / DSM 70799 / NBRC 1267 / NRRL Y-1140 / WM37)</name>
    <name type="common">Yeast</name>
    <name type="synonym">Candida sphaerica</name>
    <dbReference type="NCBI Taxonomy" id="284590"/>
    <lineage>
        <taxon>Eukaryota</taxon>
        <taxon>Fungi</taxon>
        <taxon>Dikarya</taxon>
        <taxon>Ascomycota</taxon>
        <taxon>Saccharomycotina</taxon>
        <taxon>Saccharomycetes</taxon>
        <taxon>Saccharomycetales</taxon>
        <taxon>Saccharomycetaceae</taxon>
        <taxon>Kluyveromyces</taxon>
    </lineage>
</organism>
<name>ATPD_KLULA</name>
<gene>
    <name type="primary">ATP16</name>
    <name type="ordered locus">KLLA0F14773g</name>
</gene>
<keyword id="KW-0066">ATP synthesis</keyword>
<keyword id="KW-0139">CF(1)</keyword>
<keyword id="KW-0375">Hydrogen ion transport</keyword>
<keyword id="KW-0406">Ion transport</keyword>
<keyword id="KW-0472">Membrane</keyword>
<keyword id="KW-0496">Mitochondrion</keyword>
<keyword id="KW-0999">Mitochondrion inner membrane</keyword>
<keyword id="KW-1185">Reference proteome</keyword>
<keyword id="KW-0809">Transit peptide</keyword>
<keyword id="KW-0813">Transport</keyword>
<proteinExistence type="inferred from homology"/>
<comment type="function">
    <text>Mitochondrial membrane ATP synthase (F(1)F(0) ATP synthase or Complex V) produces ATP from ADP in the presence of a proton gradient across the membrane which is generated by electron transport complexes of the respiratory chain. F-type ATPases consist of two structural domains, F(1) - containing the extramembraneous catalytic core, and F(0) - containing the membrane proton channel, linked together by a central stalk and a peripheral stalk. During catalysis, ATP turnover in the catalytic domain of F(1) is coupled via a rotary mechanism of the central stalk subunits to proton translocation. Part of the complex F(1) domain and of the central stalk which is part of the complex rotary element. Rotation of the central stalk against the surrounding alpha(3)beta(3) subunits leads to hydrolysis of ATP in three separate catalytic sites on the beta subunits.</text>
</comment>
<comment type="subunit">
    <text>F-type ATPases have 2 components, CF(1) - the catalytic core - and CF(0) - the membrane proton channel. CF(1) has five subunits: alpha(3), beta(3), gamma(1), delta(1), epsilon(1). CF(0) has three main subunits: a, b and c.</text>
</comment>
<comment type="subcellular location">
    <subcellularLocation>
        <location>Mitochondrion</location>
    </subcellularLocation>
    <subcellularLocation>
        <location>Mitochondrion inner membrane</location>
    </subcellularLocation>
</comment>
<comment type="similarity">
    <text evidence="2">Belongs to the ATPase epsilon chain family.</text>
</comment>